<feature type="chain" id="PRO_0000113735" description="Protein GrpE">
    <location>
        <begin position="1"/>
        <end position="188"/>
    </location>
</feature>
<feature type="region of interest" description="Disordered" evidence="2">
    <location>
        <begin position="1"/>
        <end position="31"/>
    </location>
</feature>
<feature type="compositionally biased region" description="Basic and acidic residues" evidence="2">
    <location>
        <begin position="1"/>
        <end position="16"/>
    </location>
</feature>
<comment type="function">
    <text evidence="1">Participates actively in the response to hyperosmotic and heat shock by preventing the aggregation of stress-denatured proteins, in association with DnaK and GrpE. It is the nucleotide exchange factor for DnaK and may function as a thermosensor. Unfolded proteins bind initially to DnaJ; upon interaction with the DnaJ-bound protein, DnaK hydrolyzes its bound ATP, resulting in the formation of a stable complex. GrpE releases ADP from DnaK; ATP binding to DnaK triggers the release of the substrate protein, thus completing the reaction cycle. Several rounds of ATP-dependent interactions between DnaJ, DnaK and GrpE are required for fully efficient folding.</text>
</comment>
<comment type="subunit">
    <text evidence="1">Homodimer.</text>
</comment>
<comment type="subcellular location">
    <subcellularLocation>
        <location evidence="1">Cytoplasm</location>
    </subcellularLocation>
</comment>
<comment type="similarity">
    <text evidence="1">Belongs to the GrpE family.</text>
</comment>
<reference key="1">
    <citation type="journal article" date="2003" name="Nature">
        <title>The genome sequence of Bacillus anthracis Ames and comparison to closely related bacteria.</title>
        <authorList>
            <person name="Read T.D."/>
            <person name="Peterson S.N."/>
            <person name="Tourasse N.J."/>
            <person name="Baillie L.W."/>
            <person name="Paulsen I.T."/>
            <person name="Nelson K.E."/>
            <person name="Tettelin H."/>
            <person name="Fouts D.E."/>
            <person name="Eisen J.A."/>
            <person name="Gill S.R."/>
            <person name="Holtzapple E.K."/>
            <person name="Okstad O.A."/>
            <person name="Helgason E."/>
            <person name="Rilstone J."/>
            <person name="Wu M."/>
            <person name="Kolonay J.F."/>
            <person name="Beanan M.J."/>
            <person name="Dodson R.J."/>
            <person name="Brinkac L.M."/>
            <person name="Gwinn M.L."/>
            <person name="DeBoy R.T."/>
            <person name="Madpu R."/>
            <person name="Daugherty S.C."/>
            <person name="Durkin A.S."/>
            <person name="Haft D.H."/>
            <person name="Nelson W.C."/>
            <person name="Peterson J.D."/>
            <person name="Pop M."/>
            <person name="Khouri H.M."/>
            <person name="Radune D."/>
            <person name="Benton J.L."/>
            <person name="Mahamoud Y."/>
            <person name="Jiang L."/>
            <person name="Hance I.R."/>
            <person name="Weidman J.F."/>
            <person name="Berry K.J."/>
            <person name="Plaut R.D."/>
            <person name="Wolf A.M."/>
            <person name="Watkins K.L."/>
            <person name="Nierman W.C."/>
            <person name="Hazen A."/>
            <person name="Cline R.T."/>
            <person name="Redmond C."/>
            <person name="Thwaite J.E."/>
            <person name="White O."/>
            <person name="Salzberg S.L."/>
            <person name="Thomason B."/>
            <person name="Friedlander A.M."/>
            <person name="Koehler T.M."/>
            <person name="Hanna P.C."/>
            <person name="Kolstoe A.-B."/>
            <person name="Fraser C.M."/>
        </authorList>
    </citation>
    <scope>NUCLEOTIDE SEQUENCE [LARGE SCALE GENOMIC DNA]</scope>
    <source>
        <strain>Ames / isolate Porton</strain>
    </source>
</reference>
<reference key="2">
    <citation type="journal article" date="2009" name="J. Bacteriol.">
        <title>The complete genome sequence of Bacillus anthracis Ames 'Ancestor'.</title>
        <authorList>
            <person name="Ravel J."/>
            <person name="Jiang L."/>
            <person name="Stanley S.T."/>
            <person name="Wilson M.R."/>
            <person name="Decker R.S."/>
            <person name="Read T.D."/>
            <person name="Worsham P."/>
            <person name="Keim P.S."/>
            <person name="Salzberg S.L."/>
            <person name="Fraser-Liggett C.M."/>
            <person name="Rasko D.A."/>
        </authorList>
    </citation>
    <scope>NUCLEOTIDE SEQUENCE [LARGE SCALE GENOMIC DNA]</scope>
    <source>
        <strain>Ames ancestor</strain>
    </source>
</reference>
<reference key="3">
    <citation type="submission" date="2004-01" db="EMBL/GenBank/DDBJ databases">
        <title>Complete genome sequence of Bacillus anthracis Sterne.</title>
        <authorList>
            <person name="Brettin T.S."/>
            <person name="Bruce D."/>
            <person name="Challacombe J.F."/>
            <person name="Gilna P."/>
            <person name="Han C."/>
            <person name="Hill K."/>
            <person name="Hitchcock P."/>
            <person name="Jackson P."/>
            <person name="Keim P."/>
            <person name="Longmire J."/>
            <person name="Lucas S."/>
            <person name="Okinaka R."/>
            <person name="Richardson P."/>
            <person name="Rubin E."/>
            <person name="Tice H."/>
        </authorList>
    </citation>
    <scope>NUCLEOTIDE SEQUENCE [LARGE SCALE GENOMIC DNA]</scope>
    <source>
        <strain>Sterne</strain>
    </source>
</reference>
<keyword id="KW-0143">Chaperone</keyword>
<keyword id="KW-0963">Cytoplasm</keyword>
<keyword id="KW-1185">Reference proteome</keyword>
<keyword id="KW-0346">Stress response</keyword>
<organism>
    <name type="scientific">Bacillus anthracis</name>
    <dbReference type="NCBI Taxonomy" id="1392"/>
    <lineage>
        <taxon>Bacteria</taxon>
        <taxon>Bacillati</taxon>
        <taxon>Bacillota</taxon>
        <taxon>Bacilli</taxon>
        <taxon>Bacillales</taxon>
        <taxon>Bacillaceae</taxon>
        <taxon>Bacillus</taxon>
        <taxon>Bacillus cereus group</taxon>
    </lineage>
</organism>
<dbReference type="EMBL" id="AE016879">
    <property type="protein sequence ID" value="AAP28249.1"/>
    <property type="molecule type" value="Genomic_DNA"/>
</dbReference>
<dbReference type="EMBL" id="AE017334">
    <property type="protein sequence ID" value="AAT33661.1"/>
    <property type="molecule type" value="Genomic_DNA"/>
</dbReference>
<dbReference type="EMBL" id="AE017225">
    <property type="protein sequence ID" value="AAT56513.1"/>
    <property type="molecule type" value="Genomic_DNA"/>
</dbReference>
<dbReference type="RefSeq" id="NP_846763.1">
    <property type="nucleotide sequence ID" value="NC_003997.3"/>
</dbReference>
<dbReference type="RefSeq" id="WP_000392710.1">
    <property type="nucleotide sequence ID" value="NZ_WXXJ01000027.1"/>
</dbReference>
<dbReference type="RefSeq" id="YP_030462.1">
    <property type="nucleotide sequence ID" value="NC_005945.1"/>
</dbReference>
<dbReference type="SMR" id="Q81LS1"/>
<dbReference type="STRING" id="261594.GBAA_4540"/>
<dbReference type="DNASU" id="1088270"/>
<dbReference type="GeneID" id="72450997"/>
<dbReference type="KEGG" id="ban:BA_4540"/>
<dbReference type="KEGG" id="bar:GBAA_4540"/>
<dbReference type="KEGG" id="bat:BAS4214"/>
<dbReference type="PATRIC" id="fig|198094.11.peg.4508"/>
<dbReference type="eggNOG" id="COG0576">
    <property type="taxonomic scope" value="Bacteria"/>
</dbReference>
<dbReference type="HOGENOM" id="CLU_057217_5_2_9"/>
<dbReference type="OMA" id="PHRHQAI"/>
<dbReference type="OrthoDB" id="9812586at2"/>
<dbReference type="Proteomes" id="UP000000427">
    <property type="component" value="Chromosome"/>
</dbReference>
<dbReference type="Proteomes" id="UP000000594">
    <property type="component" value="Chromosome"/>
</dbReference>
<dbReference type="GO" id="GO:0005737">
    <property type="term" value="C:cytoplasm"/>
    <property type="evidence" value="ECO:0007669"/>
    <property type="project" value="UniProtKB-SubCell"/>
</dbReference>
<dbReference type="GO" id="GO:0000774">
    <property type="term" value="F:adenyl-nucleotide exchange factor activity"/>
    <property type="evidence" value="ECO:0007669"/>
    <property type="project" value="InterPro"/>
</dbReference>
<dbReference type="GO" id="GO:0042803">
    <property type="term" value="F:protein homodimerization activity"/>
    <property type="evidence" value="ECO:0007669"/>
    <property type="project" value="InterPro"/>
</dbReference>
<dbReference type="GO" id="GO:0051087">
    <property type="term" value="F:protein-folding chaperone binding"/>
    <property type="evidence" value="ECO:0007669"/>
    <property type="project" value="InterPro"/>
</dbReference>
<dbReference type="GO" id="GO:0051082">
    <property type="term" value="F:unfolded protein binding"/>
    <property type="evidence" value="ECO:0007669"/>
    <property type="project" value="TreeGrafter"/>
</dbReference>
<dbReference type="GO" id="GO:0006457">
    <property type="term" value="P:protein folding"/>
    <property type="evidence" value="ECO:0007669"/>
    <property type="project" value="InterPro"/>
</dbReference>
<dbReference type="CDD" id="cd00446">
    <property type="entry name" value="GrpE"/>
    <property type="match status" value="1"/>
</dbReference>
<dbReference type="FunFam" id="2.30.22.10:FF:000001">
    <property type="entry name" value="Protein GrpE"/>
    <property type="match status" value="1"/>
</dbReference>
<dbReference type="FunFam" id="3.90.20.20:FF:000002">
    <property type="entry name" value="Protein GrpE"/>
    <property type="match status" value="1"/>
</dbReference>
<dbReference type="Gene3D" id="3.90.20.20">
    <property type="match status" value="1"/>
</dbReference>
<dbReference type="Gene3D" id="2.30.22.10">
    <property type="entry name" value="Head domain of nucleotide exchange factor GrpE"/>
    <property type="match status" value="1"/>
</dbReference>
<dbReference type="HAMAP" id="MF_01151">
    <property type="entry name" value="GrpE"/>
    <property type="match status" value="1"/>
</dbReference>
<dbReference type="InterPro" id="IPR000740">
    <property type="entry name" value="GrpE"/>
</dbReference>
<dbReference type="InterPro" id="IPR013805">
    <property type="entry name" value="GrpE_coiled_coil"/>
</dbReference>
<dbReference type="InterPro" id="IPR009012">
    <property type="entry name" value="GrpE_head"/>
</dbReference>
<dbReference type="NCBIfam" id="NF010738">
    <property type="entry name" value="PRK14140.1"/>
    <property type="match status" value="1"/>
</dbReference>
<dbReference type="PANTHER" id="PTHR21237">
    <property type="entry name" value="GRPE PROTEIN"/>
    <property type="match status" value="1"/>
</dbReference>
<dbReference type="PANTHER" id="PTHR21237:SF23">
    <property type="entry name" value="GRPE PROTEIN HOMOLOG, MITOCHONDRIAL"/>
    <property type="match status" value="1"/>
</dbReference>
<dbReference type="Pfam" id="PF01025">
    <property type="entry name" value="GrpE"/>
    <property type="match status" value="1"/>
</dbReference>
<dbReference type="PRINTS" id="PR00773">
    <property type="entry name" value="GRPEPROTEIN"/>
</dbReference>
<dbReference type="SUPFAM" id="SSF58014">
    <property type="entry name" value="Coiled-coil domain of nucleotide exchange factor GrpE"/>
    <property type="match status" value="1"/>
</dbReference>
<dbReference type="SUPFAM" id="SSF51064">
    <property type="entry name" value="Head domain of nucleotide exchange factor GrpE"/>
    <property type="match status" value="1"/>
</dbReference>
<dbReference type="PROSITE" id="PS01071">
    <property type="entry name" value="GRPE"/>
    <property type="match status" value="1"/>
</dbReference>
<gene>
    <name evidence="1" type="primary">grpE</name>
    <name type="ordered locus">BA_4540</name>
    <name type="ordered locus">GBAA_4540</name>
    <name type="ordered locus">BAS4214</name>
</gene>
<protein>
    <recommendedName>
        <fullName evidence="1">Protein GrpE</fullName>
    </recommendedName>
    <alternativeName>
        <fullName evidence="1">HSP-70 cofactor</fullName>
    </alternativeName>
</protein>
<evidence type="ECO:0000255" key="1">
    <source>
        <dbReference type="HAMAP-Rule" id="MF_01151"/>
    </source>
</evidence>
<evidence type="ECO:0000256" key="2">
    <source>
        <dbReference type="SAM" id="MobiDB-lite"/>
    </source>
</evidence>
<accession>Q81LS1</accession>
<accession>Q6HT76</accession>
<accession>Q6KMG6</accession>
<name>GRPE_BACAN</name>
<sequence length="188" mass="21657">MEERNEQVVEEVKEAQVEEAVTPENSEETVEEKSEAALLQEKVDELQAKLTETEGRTLRLQADFENYKRRVQMDKQAAEKYRAQSLVSDILPALDNFERAMQVEATDEQTKSLLQGMEMVHRQLLEALNKEGVEVIEAVGKQFDPNEHQAIMQVEDSEFESNAVVEEFQKGYKLKDRVIRPSMVKVNQ</sequence>
<proteinExistence type="inferred from homology"/>